<keyword id="KW-0131">Cell cycle</keyword>
<keyword id="KW-0132">Cell division</keyword>
<keyword id="KW-1185">Reference proteome</keyword>
<keyword id="KW-0717">Septation</keyword>
<protein>
    <recommendedName>
        <fullName evidence="1">Putative septation protein SpoVG</fullName>
    </recommendedName>
</protein>
<accession>A7H6J8</accession>
<name>SP5G_ANADF</name>
<comment type="function">
    <text evidence="1">Could be involved in septation.</text>
</comment>
<comment type="similarity">
    <text evidence="1">Belongs to the SpoVG family.</text>
</comment>
<proteinExistence type="inferred from homology"/>
<sequence length="97" mass="11170">MEITEVRVFPVNEEKLKAYVTITLDDCFVVRDLKVIHGNTGLFIAMPAKRRKDGTFKDIAHPLNTETRERMERTILAEYDRELRKGAAPRPTGTHDD</sequence>
<dbReference type="EMBL" id="CP000769">
    <property type="protein sequence ID" value="ABS24344.1"/>
    <property type="molecule type" value="Genomic_DNA"/>
</dbReference>
<dbReference type="RefSeq" id="WP_011984450.1">
    <property type="nucleotide sequence ID" value="NC_009675.1"/>
</dbReference>
<dbReference type="SMR" id="A7H6J8"/>
<dbReference type="STRING" id="404589.Anae109_0126"/>
<dbReference type="KEGG" id="afw:Anae109_0126"/>
<dbReference type="eggNOG" id="COG2088">
    <property type="taxonomic scope" value="Bacteria"/>
</dbReference>
<dbReference type="HOGENOM" id="CLU_103669_2_1_7"/>
<dbReference type="OrthoDB" id="9796286at2"/>
<dbReference type="Proteomes" id="UP000006382">
    <property type="component" value="Chromosome"/>
</dbReference>
<dbReference type="GO" id="GO:0000917">
    <property type="term" value="P:division septum assembly"/>
    <property type="evidence" value="ECO:0007669"/>
    <property type="project" value="UniProtKB-KW"/>
</dbReference>
<dbReference type="GO" id="GO:0030435">
    <property type="term" value="P:sporulation resulting in formation of a cellular spore"/>
    <property type="evidence" value="ECO:0007669"/>
    <property type="project" value="InterPro"/>
</dbReference>
<dbReference type="Gene3D" id="3.30.1120.40">
    <property type="entry name" value="Stage V sporulation protein G"/>
    <property type="match status" value="1"/>
</dbReference>
<dbReference type="HAMAP" id="MF_00819">
    <property type="entry name" value="SpoVG"/>
    <property type="match status" value="1"/>
</dbReference>
<dbReference type="InterPro" id="IPR007170">
    <property type="entry name" value="SpoVG"/>
</dbReference>
<dbReference type="InterPro" id="IPR036751">
    <property type="entry name" value="SpoVG_sf"/>
</dbReference>
<dbReference type="NCBIfam" id="NF009749">
    <property type="entry name" value="PRK13259.1"/>
    <property type="match status" value="1"/>
</dbReference>
<dbReference type="PANTHER" id="PTHR38429">
    <property type="entry name" value="SEPTATION PROTEIN SPOVG-RELATED"/>
    <property type="match status" value="1"/>
</dbReference>
<dbReference type="PANTHER" id="PTHR38429:SF1">
    <property type="entry name" value="SEPTATION PROTEIN SPOVG-RELATED"/>
    <property type="match status" value="1"/>
</dbReference>
<dbReference type="Pfam" id="PF04026">
    <property type="entry name" value="SpoVG"/>
    <property type="match status" value="1"/>
</dbReference>
<dbReference type="SUPFAM" id="SSF160537">
    <property type="entry name" value="SpoVG-like"/>
    <property type="match status" value="1"/>
</dbReference>
<organism>
    <name type="scientific">Anaeromyxobacter sp. (strain Fw109-5)</name>
    <dbReference type="NCBI Taxonomy" id="404589"/>
    <lineage>
        <taxon>Bacteria</taxon>
        <taxon>Pseudomonadati</taxon>
        <taxon>Myxococcota</taxon>
        <taxon>Myxococcia</taxon>
        <taxon>Myxococcales</taxon>
        <taxon>Cystobacterineae</taxon>
        <taxon>Anaeromyxobacteraceae</taxon>
        <taxon>Anaeromyxobacter</taxon>
    </lineage>
</organism>
<feature type="chain" id="PRO_1000062419" description="Putative septation protein SpoVG">
    <location>
        <begin position="1"/>
        <end position="97"/>
    </location>
</feature>
<reference key="1">
    <citation type="journal article" date="2015" name="Genome Announc.">
        <title>Complete genome sequence of Anaeromyxobacter sp. Fw109-5, an anaerobic, metal-reducing bacterium isolated from a contaminated subsurface environment.</title>
        <authorList>
            <person name="Hwang C."/>
            <person name="Copeland A."/>
            <person name="Lucas S."/>
            <person name="Lapidus A."/>
            <person name="Barry K."/>
            <person name="Glavina Del Rio T."/>
            <person name="Dalin E."/>
            <person name="Tice H."/>
            <person name="Pitluck S."/>
            <person name="Sims D."/>
            <person name="Brettin T."/>
            <person name="Bruce D.C."/>
            <person name="Detter J.C."/>
            <person name="Han C.S."/>
            <person name="Schmutz J."/>
            <person name="Larimer F.W."/>
            <person name="Land M.L."/>
            <person name="Hauser L.J."/>
            <person name="Kyrpides N."/>
            <person name="Lykidis A."/>
            <person name="Richardson P."/>
            <person name="Belieav A."/>
            <person name="Sanford R.A."/>
            <person name="Loeffler F.E."/>
            <person name="Fields M.W."/>
        </authorList>
    </citation>
    <scope>NUCLEOTIDE SEQUENCE [LARGE SCALE GENOMIC DNA]</scope>
    <source>
        <strain>Fw109-5</strain>
    </source>
</reference>
<gene>
    <name evidence="1" type="primary">spoVG</name>
    <name type="ordered locus">Anae109_0126</name>
</gene>
<evidence type="ECO:0000255" key="1">
    <source>
        <dbReference type="HAMAP-Rule" id="MF_00819"/>
    </source>
</evidence>